<keyword id="KW-0067">ATP-binding</keyword>
<keyword id="KW-0119">Carbohydrate metabolism</keyword>
<keyword id="KW-0320">Glycogen biosynthesis</keyword>
<keyword id="KW-0321">Glycogen metabolism</keyword>
<keyword id="KW-0547">Nucleotide-binding</keyword>
<keyword id="KW-0548">Nucleotidyltransferase</keyword>
<keyword id="KW-1185">Reference proteome</keyword>
<keyword id="KW-0808">Transferase</keyword>
<reference key="1">
    <citation type="journal article" date="2007" name="J. Bacteriol.">
        <title>Genome sequence analysis of the emerging human pathogenic acetic acid bacterium Granulibacter bethesdensis.</title>
        <authorList>
            <person name="Greenberg D.E."/>
            <person name="Porcella S.F."/>
            <person name="Zelazny A.M."/>
            <person name="Virtaneva K."/>
            <person name="Sturdevant D.E."/>
            <person name="Kupko J.J. III"/>
            <person name="Barbian K.D."/>
            <person name="Babar A."/>
            <person name="Dorward D.W."/>
            <person name="Holland S.M."/>
        </authorList>
    </citation>
    <scope>NUCLEOTIDE SEQUENCE [LARGE SCALE GENOMIC DNA]</scope>
    <source>
        <strain>ATCC BAA-1260 / CGDNIH1</strain>
    </source>
</reference>
<organism>
    <name type="scientific">Granulibacter bethesdensis (strain ATCC BAA-1260 / CGDNIH1)</name>
    <dbReference type="NCBI Taxonomy" id="391165"/>
    <lineage>
        <taxon>Bacteria</taxon>
        <taxon>Pseudomonadati</taxon>
        <taxon>Pseudomonadota</taxon>
        <taxon>Alphaproteobacteria</taxon>
        <taxon>Acetobacterales</taxon>
        <taxon>Acetobacteraceae</taxon>
        <taxon>Granulibacter</taxon>
    </lineage>
</organism>
<comment type="function">
    <text evidence="1">Involved in the biosynthesis of ADP-glucose, a building block required for the elongation reactions to produce glycogen. Catalyzes the reaction between ATP and alpha-D-glucose 1-phosphate (G1P) to produce pyrophosphate and ADP-Glc.</text>
</comment>
<comment type="catalytic activity">
    <reaction evidence="1">
        <text>alpha-D-glucose 1-phosphate + ATP + H(+) = ADP-alpha-D-glucose + diphosphate</text>
        <dbReference type="Rhea" id="RHEA:12120"/>
        <dbReference type="ChEBI" id="CHEBI:15378"/>
        <dbReference type="ChEBI" id="CHEBI:30616"/>
        <dbReference type="ChEBI" id="CHEBI:33019"/>
        <dbReference type="ChEBI" id="CHEBI:57498"/>
        <dbReference type="ChEBI" id="CHEBI:58601"/>
        <dbReference type="EC" id="2.7.7.27"/>
    </reaction>
</comment>
<comment type="pathway">
    <text evidence="1">Glycan biosynthesis; glycogen biosynthesis.</text>
</comment>
<comment type="subunit">
    <text evidence="1">Homotetramer.</text>
</comment>
<comment type="similarity">
    <text evidence="1">Belongs to the bacterial/plant glucose-1-phosphate adenylyltransferase family.</text>
</comment>
<comment type="sequence caution" evidence="2">
    <conflict type="erroneous initiation">
        <sequence resource="EMBL-CDS" id="ABI63238"/>
    </conflict>
</comment>
<protein>
    <recommendedName>
        <fullName evidence="1">Glucose-1-phosphate adenylyltransferase</fullName>
        <ecNumber evidence="1">2.7.7.27</ecNumber>
    </recommendedName>
    <alternativeName>
        <fullName evidence="1">ADP-glucose pyrophosphorylase</fullName>
        <shortName evidence="1">ADPGlc PPase</shortName>
    </alternativeName>
    <alternativeName>
        <fullName evidence="1">ADP-glucose synthase</fullName>
    </alternativeName>
</protein>
<accession>Q0BPL4</accession>
<evidence type="ECO:0000255" key="1">
    <source>
        <dbReference type="HAMAP-Rule" id="MF_00624"/>
    </source>
</evidence>
<evidence type="ECO:0000305" key="2"/>
<sequence length="417" mass="46154">MSGTSSIARSTMAYVLAGGRGSRLLELTDTRAKPAVYFGGKSRIIDFALSNAVNSGIRRIGVATQYKAHSLIRHMQRGWNFFRPERNEGFDILPASQRVSETQWYEGTADAVYQNLDIIAGYEPEYMIILAGDHIYKMDYEIMLHQHVERQADVTVGCIEVPREEATGFGVMQVDDTGRITAFLEKPSDPPGMPGQPDIALASMGIYVFKTKFLFDVLRRDAADPDSKHDFGGDIIPDLVENGTAIAHRFSDSCVRSSKTAEAYWRDVGTLDSYWQANLDLTNVVPTLDLYDSGWPIWTYNEISPPAKFVYDDVGRRGMAVDSLVAGGCIVSGASLSRSLISTGCRVHSFSQLHGTVVLPYADIARSARLRNTVVDRGVRIPEGLVVGEDPELDAKRFRRTEKGICLITQPMIDRLG</sequence>
<feature type="chain" id="PRO_0000261873" description="Glucose-1-phosphate adenylyltransferase">
    <location>
        <begin position="1"/>
        <end position="417"/>
    </location>
</feature>
<feature type="binding site" evidence="1">
    <location>
        <position position="105"/>
    </location>
    <ligand>
        <name>alpha-D-glucose 1-phosphate</name>
        <dbReference type="ChEBI" id="CHEBI:58601"/>
    </ligand>
</feature>
<feature type="binding site" evidence="1">
    <location>
        <position position="170"/>
    </location>
    <ligand>
        <name>alpha-D-glucose 1-phosphate</name>
        <dbReference type="ChEBI" id="CHEBI:58601"/>
    </ligand>
</feature>
<feature type="binding site" evidence="1">
    <location>
        <begin position="185"/>
        <end position="186"/>
    </location>
    <ligand>
        <name>alpha-D-glucose 1-phosphate</name>
        <dbReference type="ChEBI" id="CHEBI:58601"/>
    </ligand>
</feature>
<feature type="binding site" evidence="1">
    <location>
        <position position="203"/>
    </location>
    <ligand>
        <name>alpha-D-glucose 1-phosphate</name>
        <dbReference type="ChEBI" id="CHEBI:58601"/>
    </ligand>
</feature>
<gene>
    <name evidence="1" type="primary">glgC</name>
    <name type="ordered locus">GbCGDNIH1_2340</name>
</gene>
<name>GLGC_GRABC</name>
<dbReference type="EC" id="2.7.7.27" evidence="1"/>
<dbReference type="EMBL" id="CP000394">
    <property type="protein sequence ID" value="ABI63238.1"/>
    <property type="status" value="ALT_INIT"/>
    <property type="molecule type" value="Genomic_DNA"/>
</dbReference>
<dbReference type="RefSeq" id="WP_025319829.1">
    <property type="nucleotide sequence ID" value="NC_008343.2"/>
</dbReference>
<dbReference type="SMR" id="Q0BPL4"/>
<dbReference type="STRING" id="391165.GbCGDNIH1_2340"/>
<dbReference type="KEGG" id="gbe:GbCGDNIH1_2340"/>
<dbReference type="eggNOG" id="COG0448">
    <property type="taxonomic scope" value="Bacteria"/>
</dbReference>
<dbReference type="HOGENOM" id="CLU_029499_14_1_5"/>
<dbReference type="OrthoDB" id="9801810at2"/>
<dbReference type="UniPathway" id="UPA00164"/>
<dbReference type="Proteomes" id="UP000001963">
    <property type="component" value="Chromosome"/>
</dbReference>
<dbReference type="GO" id="GO:0005524">
    <property type="term" value="F:ATP binding"/>
    <property type="evidence" value="ECO:0007669"/>
    <property type="project" value="UniProtKB-KW"/>
</dbReference>
<dbReference type="GO" id="GO:0008878">
    <property type="term" value="F:glucose-1-phosphate adenylyltransferase activity"/>
    <property type="evidence" value="ECO:0007669"/>
    <property type="project" value="UniProtKB-UniRule"/>
</dbReference>
<dbReference type="GO" id="GO:0005978">
    <property type="term" value="P:glycogen biosynthetic process"/>
    <property type="evidence" value="ECO:0007669"/>
    <property type="project" value="UniProtKB-UniRule"/>
</dbReference>
<dbReference type="CDD" id="cd02508">
    <property type="entry name" value="ADP_Glucose_PP"/>
    <property type="match status" value="1"/>
</dbReference>
<dbReference type="CDD" id="cd04651">
    <property type="entry name" value="LbH_G1P_AT_C"/>
    <property type="match status" value="1"/>
</dbReference>
<dbReference type="Gene3D" id="2.160.10.10">
    <property type="entry name" value="Hexapeptide repeat proteins"/>
    <property type="match status" value="1"/>
</dbReference>
<dbReference type="Gene3D" id="3.90.550.10">
    <property type="entry name" value="Spore Coat Polysaccharide Biosynthesis Protein SpsA, Chain A"/>
    <property type="match status" value="1"/>
</dbReference>
<dbReference type="HAMAP" id="MF_00624">
    <property type="entry name" value="GlgC"/>
    <property type="match status" value="1"/>
</dbReference>
<dbReference type="InterPro" id="IPR011831">
    <property type="entry name" value="ADP-Glc_PPase"/>
</dbReference>
<dbReference type="InterPro" id="IPR005836">
    <property type="entry name" value="ADP_Glu_pyroP_CS"/>
</dbReference>
<dbReference type="InterPro" id="IPR023049">
    <property type="entry name" value="GlgC_bac"/>
</dbReference>
<dbReference type="InterPro" id="IPR056818">
    <property type="entry name" value="GlmU/GlgC-like_hexapep"/>
</dbReference>
<dbReference type="InterPro" id="IPR005835">
    <property type="entry name" value="NTP_transferase_dom"/>
</dbReference>
<dbReference type="InterPro" id="IPR029044">
    <property type="entry name" value="Nucleotide-diphossugar_trans"/>
</dbReference>
<dbReference type="InterPro" id="IPR011004">
    <property type="entry name" value="Trimer_LpxA-like_sf"/>
</dbReference>
<dbReference type="NCBIfam" id="TIGR02091">
    <property type="entry name" value="glgC"/>
    <property type="match status" value="1"/>
</dbReference>
<dbReference type="NCBIfam" id="NF001947">
    <property type="entry name" value="PRK00725.1"/>
    <property type="match status" value="1"/>
</dbReference>
<dbReference type="NCBIfam" id="NF002023">
    <property type="entry name" value="PRK00844.1"/>
    <property type="match status" value="1"/>
</dbReference>
<dbReference type="PANTHER" id="PTHR43523:SF2">
    <property type="entry name" value="GLUCOSE-1-PHOSPHATE ADENYLYLTRANSFERASE"/>
    <property type="match status" value="1"/>
</dbReference>
<dbReference type="PANTHER" id="PTHR43523">
    <property type="entry name" value="GLUCOSE-1-PHOSPHATE ADENYLYLTRANSFERASE-RELATED"/>
    <property type="match status" value="1"/>
</dbReference>
<dbReference type="Pfam" id="PF24894">
    <property type="entry name" value="Hexapep_GlmU"/>
    <property type="match status" value="1"/>
</dbReference>
<dbReference type="Pfam" id="PF00483">
    <property type="entry name" value="NTP_transferase"/>
    <property type="match status" value="1"/>
</dbReference>
<dbReference type="SUPFAM" id="SSF53448">
    <property type="entry name" value="Nucleotide-diphospho-sugar transferases"/>
    <property type="match status" value="1"/>
</dbReference>
<dbReference type="SUPFAM" id="SSF51161">
    <property type="entry name" value="Trimeric LpxA-like enzymes"/>
    <property type="match status" value="1"/>
</dbReference>
<dbReference type="PROSITE" id="PS00808">
    <property type="entry name" value="ADP_GLC_PYROPHOSPH_1"/>
    <property type="match status" value="1"/>
</dbReference>
<dbReference type="PROSITE" id="PS00809">
    <property type="entry name" value="ADP_GLC_PYROPHOSPH_2"/>
    <property type="match status" value="1"/>
</dbReference>
<dbReference type="PROSITE" id="PS00810">
    <property type="entry name" value="ADP_GLC_PYROPHOSPH_3"/>
    <property type="match status" value="1"/>
</dbReference>
<proteinExistence type="inferred from homology"/>